<dbReference type="EC" id="2.4.2.10" evidence="1"/>
<dbReference type="EMBL" id="CP001277">
    <property type="protein sequence ID" value="ACQ67262.1"/>
    <property type="molecule type" value="Genomic_DNA"/>
</dbReference>
<dbReference type="RefSeq" id="WP_012738219.1">
    <property type="nucleotide sequence ID" value="NC_012751.1"/>
</dbReference>
<dbReference type="SMR" id="C4K3W9"/>
<dbReference type="STRING" id="572265.HDEF_0508"/>
<dbReference type="GeneID" id="66260393"/>
<dbReference type="KEGG" id="hde:HDEF_0508"/>
<dbReference type="eggNOG" id="COG0461">
    <property type="taxonomic scope" value="Bacteria"/>
</dbReference>
<dbReference type="HOGENOM" id="CLU_074878_0_1_6"/>
<dbReference type="UniPathway" id="UPA00070">
    <property type="reaction ID" value="UER00119"/>
</dbReference>
<dbReference type="Proteomes" id="UP000002334">
    <property type="component" value="Chromosome"/>
</dbReference>
<dbReference type="GO" id="GO:0005737">
    <property type="term" value="C:cytoplasm"/>
    <property type="evidence" value="ECO:0007669"/>
    <property type="project" value="TreeGrafter"/>
</dbReference>
<dbReference type="GO" id="GO:0000287">
    <property type="term" value="F:magnesium ion binding"/>
    <property type="evidence" value="ECO:0007669"/>
    <property type="project" value="UniProtKB-UniRule"/>
</dbReference>
<dbReference type="GO" id="GO:0004588">
    <property type="term" value="F:orotate phosphoribosyltransferase activity"/>
    <property type="evidence" value="ECO:0007669"/>
    <property type="project" value="UniProtKB-UniRule"/>
</dbReference>
<dbReference type="GO" id="GO:0006207">
    <property type="term" value="P:'de novo' pyrimidine nucleobase biosynthetic process"/>
    <property type="evidence" value="ECO:0007669"/>
    <property type="project" value="TreeGrafter"/>
</dbReference>
<dbReference type="GO" id="GO:0044205">
    <property type="term" value="P:'de novo' UMP biosynthetic process"/>
    <property type="evidence" value="ECO:0007669"/>
    <property type="project" value="UniProtKB-UniRule"/>
</dbReference>
<dbReference type="GO" id="GO:0046132">
    <property type="term" value="P:pyrimidine ribonucleoside biosynthetic process"/>
    <property type="evidence" value="ECO:0007669"/>
    <property type="project" value="TreeGrafter"/>
</dbReference>
<dbReference type="CDD" id="cd06223">
    <property type="entry name" value="PRTases_typeI"/>
    <property type="match status" value="1"/>
</dbReference>
<dbReference type="FunFam" id="3.40.50.2020:FF:000008">
    <property type="entry name" value="Orotate phosphoribosyltransferase"/>
    <property type="match status" value="1"/>
</dbReference>
<dbReference type="Gene3D" id="3.40.50.2020">
    <property type="match status" value="1"/>
</dbReference>
<dbReference type="HAMAP" id="MF_01208">
    <property type="entry name" value="PyrE"/>
    <property type="match status" value="1"/>
</dbReference>
<dbReference type="InterPro" id="IPR023031">
    <property type="entry name" value="OPRT"/>
</dbReference>
<dbReference type="InterPro" id="IPR004467">
    <property type="entry name" value="Or_phspho_trans_dom"/>
</dbReference>
<dbReference type="InterPro" id="IPR000836">
    <property type="entry name" value="PRibTrfase_dom"/>
</dbReference>
<dbReference type="InterPro" id="IPR029057">
    <property type="entry name" value="PRTase-like"/>
</dbReference>
<dbReference type="NCBIfam" id="TIGR00336">
    <property type="entry name" value="pyrE"/>
    <property type="match status" value="1"/>
</dbReference>
<dbReference type="PANTHER" id="PTHR46683">
    <property type="entry name" value="OROTATE PHOSPHORIBOSYLTRANSFERASE 1-RELATED"/>
    <property type="match status" value="1"/>
</dbReference>
<dbReference type="PANTHER" id="PTHR46683:SF1">
    <property type="entry name" value="OROTATE PHOSPHORIBOSYLTRANSFERASE 1-RELATED"/>
    <property type="match status" value="1"/>
</dbReference>
<dbReference type="Pfam" id="PF00156">
    <property type="entry name" value="Pribosyltran"/>
    <property type="match status" value="1"/>
</dbReference>
<dbReference type="SUPFAM" id="SSF53271">
    <property type="entry name" value="PRTase-like"/>
    <property type="match status" value="1"/>
</dbReference>
<dbReference type="PROSITE" id="PS00103">
    <property type="entry name" value="PUR_PYR_PR_TRANSFER"/>
    <property type="match status" value="1"/>
</dbReference>
<sequence length="218" mass="24199">MKKYKAQFIEFMLDRKILTFGEFILKSGRVSPYFFNAGLFNKGSDLIKLGRFYADALIDSGIECDLLFGPAYKGIPITITTAMALYANHHLDLTYCFNRKEIKDHGEGGGLVGGALQGKVLLVDDVITAGTAIRESVEIIHAHSASLAGILVALDRQERGNGTLSAIEEIEQKYQSKVISIVTLEDMIHFLKNEKTMIEAFSALNKYAEQYGVLRKNL</sequence>
<feature type="chain" id="PRO_1000213861" description="Orotate phosphoribosyltransferase">
    <location>
        <begin position="1"/>
        <end position="218"/>
    </location>
</feature>
<feature type="binding site" description="in other chain" evidence="1">
    <location>
        <position position="26"/>
    </location>
    <ligand>
        <name>5-phospho-alpha-D-ribose 1-diphosphate</name>
        <dbReference type="ChEBI" id="CHEBI:58017"/>
        <note>ligand shared between dimeric partners</note>
    </ligand>
</feature>
<feature type="binding site" evidence="1">
    <location>
        <begin position="34"/>
        <end position="35"/>
    </location>
    <ligand>
        <name>orotate</name>
        <dbReference type="ChEBI" id="CHEBI:30839"/>
    </ligand>
</feature>
<feature type="binding site" description="in other chain" evidence="1">
    <location>
        <begin position="72"/>
        <end position="73"/>
    </location>
    <ligand>
        <name>5-phospho-alpha-D-ribose 1-diphosphate</name>
        <dbReference type="ChEBI" id="CHEBI:58017"/>
        <note>ligand shared between dimeric partners</note>
    </ligand>
</feature>
<feature type="binding site" evidence="1">
    <location>
        <position position="99"/>
    </location>
    <ligand>
        <name>5-phospho-alpha-D-ribose 1-diphosphate</name>
        <dbReference type="ChEBI" id="CHEBI:58017"/>
        <note>ligand shared between dimeric partners</note>
    </ligand>
</feature>
<feature type="binding site" description="in other chain" evidence="1">
    <location>
        <position position="100"/>
    </location>
    <ligand>
        <name>5-phospho-alpha-D-ribose 1-diphosphate</name>
        <dbReference type="ChEBI" id="CHEBI:58017"/>
        <note>ligand shared between dimeric partners</note>
    </ligand>
</feature>
<feature type="binding site" evidence="1">
    <location>
        <position position="103"/>
    </location>
    <ligand>
        <name>5-phospho-alpha-D-ribose 1-diphosphate</name>
        <dbReference type="ChEBI" id="CHEBI:58017"/>
        <note>ligand shared between dimeric partners</note>
    </ligand>
</feature>
<feature type="binding site" evidence="1">
    <location>
        <position position="105"/>
    </location>
    <ligand>
        <name>5-phospho-alpha-D-ribose 1-diphosphate</name>
        <dbReference type="ChEBI" id="CHEBI:58017"/>
        <note>ligand shared between dimeric partners</note>
    </ligand>
</feature>
<feature type="binding site" description="in other chain" evidence="1">
    <location>
        <begin position="124"/>
        <end position="132"/>
    </location>
    <ligand>
        <name>5-phospho-alpha-D-ribose 1-diphosphate</name>
        <dbReference type="ChEBI" id="CHEBI:58017"/>
        <note>ligand shared between dimeric partners</note>
    </ligand>
</feature>
<feature type="binding site" evidence="1">
    <location>
        <position position="128"/>
    </location>
    <ligand>
        <name>orotate</name>
        <dbReference type="ChEBI" id="CHEBI:30839"/>
    </ligand>
</feature>
<feature type="binding site" evidence="1">
    <location>
        <position position="156"/>
    </location>
    <ligand>
        <name>orotate</name>
        <dbReference type="ChEBI" id="CHEBI:30839"/>
    </ligand>
</feature>
<proteinExistence type="inferred from homology"/>
<name>PYRE_HAMD5</name>
<accession>C4K3W9</accession>
<evidence type="ECO:0000255" key="1">
    <source>
        <dbReference type="HAMAP-Rule" id="MF_01208"/>
    </source>
</evidence>
<protein>
    <recommendedName>
        <fullName evidence="1">Orotate phosphoribosyltransferase</fullName>
        <shortName evidence="1">OPRT</shortName>
        <shortName evidence="1">OPRTase</shortName>
        <ecNumber evidence="1">2.4.2.10</ecNumber>
    </recommendedName>
</protein>
<comment type="function">
    <text evidence="1">Catalyzes the transfer of a ribosyl phosphate group from 5-phosphoribose 1-diphosphate to orotate, leading to the formation of orotidine monophosphate (OMP).</text>
</comment>
<comment type="catalytic activity">
    <reaction evidence="1">
        <text>orotidine 5'-phosphate + diphosphate = orotate + 5-phospho-alpha-D-ribose 1-diphosphate</text>
        <dbReference type="Rhea" id="RHEA:10380"/>
        <dbReference type="ChEBI" id="CHEBI:30839"/>
        <dbReference type="ChEBI" id="CHEBI:33019"/>
        <dbReference type="ChEBI" id="CHEBI:57538"/>
        <dbReference type="ChEBI" id="CHEBI:58017"/>
        <dbReference type="EC" id="2.4.2.10"/>
    </reaction>
</comment>
<comment type="cofactor">
    <cofactor evidence="1">
        <name>Mg(2+)</name>
        <dbReference type="ChEBI" id="CHEBI:18420"/>
    </cofactor>
</comment>
<comment type="pathway">
    <text evidence="1">Pyrimidine metabolism; UMP biosynthesis via de novo pathway; UMP from orotate: step 1/2.</text>
</comment>
<comment type="subunit">
    <text evidence="1">Homodimer.</text>
</comment>
<comment type="similarity">
    <text evidence="1">Belongs to the purine/pyrimidine phosphoribosyltransferase family. PyrE subfamily.</text>
</comment>
<keyword id="KW-0328">Glycosyltransferase</keyword>
<keyword id="KW-0460">Magnesium</keyword>
<keyword id="KW-0665">Pyrimidine biosynthesis</keyword>
<keyword id="KW-0808">Transferase</keyword>
<reference key="1">
    <citation type="journal article" date="2009" name="Proc. Natl. Acad. Sci. U.S.A.">
        <title>Hamiltonella defensa, genome evolution of protective bacterial endosymbiont from pathogenic ancestors.</title>
        <authorList>
            <person name="Degnan P.H."/>
            <person name="Yu Y."/>
            <person name="Sisneros N."/>
            <person name="Wing R.A."/>
            <person name="Moran N.A."/>
        </authorList>
    </citation>
    <scope>NUCLEOTIDE SEQUENCE [LARGE SCALE GENOMIC DNA]</scope>
    <source>
        <strain>5AT</strain>
    </source>
</reference>
<organism>
    <name type="scientific">Hamiltonella defensa subsp. Acyrthosiphon pisum (strain 5AT)</name>
    <dbReference type="NCBI Taxonomy" id="572265"/>
    <lineage>
        <taxon>Bacteria</taxon>
        <taxon>Pseudomonadati</taxon>
        <taxon>Pseudomonadota</taxon>
        <taxon>Gammaproteobacteria</taxon>
        <taxon>Enterobacterales</taxon>
        <taxon>Enterobacteriaceae</taxon>
        <taxon>aphid secondary symbionts</taxon>
        <taxon>Candidatus Hamiltonella</taxon>
    </lineage>
</organism>
<gene>
    <name evidence="1" type="primary">pyrE</name>
    <name type="ordered locus">HDEF_0508</name>
</gene>